<protein>
    <recommendedName>
        <fullName>Universal stress protein MT1672</fullName>
    </recommendedName>
</protein>
<accession>P9WFC8</accession>
<accession>L0T8U6</accession>
<accession>O06153</accession>
<accession>Q7D884</accession>
<proteinExistence type="inferred from homology"/>
<name>Y1636_MYCTO</name>
<organism>
    <name type="scientific">Mycobacterium tuberculosis (strain CDC 1551 / Oshkosh)</name>
    <dbReference type="NCBI Taxonomy" id="83331"/>
    <lineage>
        <taxon>Bacteria</taxon>
        <taxon>Bacillati</taxon>
        <taxon>Actinomycetota</taxon>
        <taxon>Actinomycetes</taxon>
        <taxon>Mycobacteriales</taxon>
        <taxon>Mycobacteriaceae</taxon>
        <taxon>Mycobacterium</taxon>
        <taxon>Mycobacterium tuberculosis complex</taxon>
    </lineage>
</organism>
<reference key="1">
    <citation type="journal article" date="2002" name="J. Bacteriol.">
        <title>Whole-genome comparison of Mycobacterium tuberculosis clinical and laboratory strains.</title>
        <authorList>
            <person name="Fleischmann R.D."/>
            <person name="Alland D."/>
            <person name="Eisen J.A."/>
            <person name="Carpenter L."/>
            <person name="White O."/>
            <person name="Peterson J.D."/>
            <person name="DeBoy R.T."/>
            <person name="Dodson R.J."/>
            <person name="Gwinn M.L."/>
            <person name="Haft D.H."/>
            <person name="Hickey E.K."/>
            <person name="Kolonay J.F."/>
            <person name="Nelson W.C."/>
            <person name="Umayam L.A."/>
            <person name="Ermolaeva M.D."/>
            <person name="Salzberg S.L."/>
            <person name="Delcher A."/>
            <person name="Utterback T.R."/>
            <person name="Weidman J.F."/>
            <person name="Khouri H.M."/>
            <person name="Gill J."/>
            <person name="Mikula A."/>
            <person name="Bishai W."/>
            <person name="Jacobs W.R. Jr."/>
            <person name="Venter J.C."/>
            <person name="Fraser C.M."/>
        </authorList>
    </citation>
    <scope>NUCLEOTIDE SEQUENCE [LARGE SCALE GENOMIC DNA]</scope>
    <source>
        <strain>CDC 1551 / Oshkosh</strain>
    </source>
</reference>
<evidence type="ECO:0000305" key="1"/>
<gene>
    <name type="ordered locus">MT1672</name>
</gene>
<sequence length="146" mass="15312">MSAYKTVVVGTDGSDSSMRAVDRAAQIAGADAKLIIASAYLPQHEDARAADILKDESYKVTGTAPIYEILHDAKERAHNAGAKNVEERPIVGAPVDALVNLADEEKADLLVVGNVGLSTIAGRLLGSVPANVSRRAKVDVLIVHTT</sequence>
<feature type="chain" id="PRO_0000428561" description="Universal stress protein MT1672">
    <location>
        <begin position="1"/>
        <end position="146"/>
    </location>
</feature>
<keyword id="KW-1185">Reference proteome</keyword>
<comment type="similarity">
    <text evidence="1">Belongs to the universal stress protein A family.</text>
</comment>
<dbReference type="EMBL" id="AE000516">
    <property type="protein sequence ID" value="AAK45942.1"/>
    <property type="molecule type" value="Genomic_DNA"/>
</dbReference>
<dbReference type="PIR" id="B70560">
    <property type="entry name" value="B70560"/>
</dbReference>
<dbReference type="RefSeq" id="WP_003408085.1">
    <property type="nucleotide sequence ID" value="NZ_KK341227.1"/>
</dbReference>
<dbReference type="SMR" id="P9WFC8"/>
<dbReference type="KEGG" id="mtc:MT1672"/>
<dbReference type="PATRIC" id="fig|83331.31.peg.1798"/>
<dbReference type="HOGENOM" id="CLU_049301_16_4_11"/>
<dbReference type="Proteomes" id="UP000001020">
    <property type="component" value="Chromosome"/>
</dbReference>
<dbReference type="CDD" id="cd00293">
    <property type="entry name" value="USP-like"/>
    <property type="match status" value="1"/>
</dbReference>
<dbReference type="FunFam" id="3.40.50.620:FF:000257">
    <property type="entry name" value="Universal stress protein Rv1636"/>
    <property type="match status" value="1"/>
</dbReference>
<dbReference type="Gene3D" id="3.40.50.620">
    <property type="entry name" value="HUPs"/>
    <property type="match status" value="1"/>
</dbReference>
<dbReference type="InterPro" id="IPR014729">
    <property type="entry name" value="Rossmann-like_a/b/a_fold"/>
</dbReference>
<dbReference type="InterPro" id="IPR006015">
    <property type="entry name" value="Universal_stress_UspA"/>
</dbReference>
<dbReference type="InterPro" id="IPR006016">
    <property type="entry name" value="UspA"/>
</dbReference>
<dbReference type="PANTHER" id="PTHR46268">
    <property type="entry name" value="STRESS RESPONSE PROTEIN NHAX"/>
    <property type="match status" value="1"/>
</dbReference>
<dbReference type="PANTHER" id="PTHR46268:SF6">
    <property type="entry name" value="UNIVERSAL STRESS PROTEIN UP12"/>
    <property type="match status" value="1"/>
</dbReference>
<dbReference type="Pfam" id="PF00582">
    <property type="entry name" value="Usp"/>
    <property type="match status" value="1"/>
</dbReference>
<dbReference type="PRINTS" id="PR01438">
    <property type="entry name" value="UNVRSLSTRESS"/>
</dbReference>
<dbReference type="SUPFAM" id="SSF52402">
    <property type="entry name" value="Adenine nucleotide alpha hydrolases-like"/>
    <property type="match status" value="1"/>
</dbReference>